<feature type="chain" id="PRO_0000443456" description="Norsolorinic acid synthase">
    <location>
        <begin position="1"/>
        <end position="2399"/>
    </location>
</feature>
<feature type="domain" description="Ketosynthase family 3 (KS3)" evidence="5">
    <location>
        <begin position="372"/>
        <end position="805"/>
    </location>
</feature>
<feature type="domain" description="PKS/mFAS DH" evidence="6">
    <location>
        <begin position="1340"/>
        <end position="1658"/>
    </location>
</feature>
<feature type="domain" description="Carrier 1" evidence="4">
    <location>
        <begin position="1733"/>
        <end position="1812"/>
    </location>
</feature>
<feature type="domain" description="Carrier 2" evidence="4">
    <location>
        <begin position="1877"/>
        <end position="1953"/>
    </location>
</feature>
<feature type="domain" description="Carrier 3" evidence="4">
    <location>
        <begin position="2020"/>
        <end position="2099"/>
    </location>
</feature>
<feature type="region of interest" description="Starter unit:ACP transacylase (SAT) domain" evidence="3">
    <location>
        <begin position="10"/>
        <end position="247"/>
    </location>
</feature>
<feature type="region of interest" description="Malonyl-CoA:ACP transacylase (MAT) domain" evidence="2 3">
    <location>
        <begin position="905"/>
        <end position="1192"/>
    </location>
</feature>
<feature type="region of interest" description="Disordered" evidence="7">
    <location>
        <begin position="1307"/>
        <end position="1327"/>
    </location>
</feature>
<feature type="region of interest" description="N-terminal hotdog fold" evidence="6">
    <location>
        <begin position="1340"/>
        <end position="1483"/>
    </location>
</feature>
<feature type="region of interest" description="Product template (PT) domain" evidence="3">
    <location>
        <begin position="1353"/>
        <end position="1658"/>
    </location>
</feature>
<feature type="region of interest" description="C-terminal hotdog fold" evidence="6">
    <location>
        <begin position="1510"/>
        <end position="1658"/>
    </location>
</feature>
<feature type="region of interest" description="Disordered" evidence="7">
    <location>
        <begin position="1665"/>
        <end position="1734"/>
    </location>
</feature>
<feature type="region of interest" description="Disordered" evidence="7">
    <location>
        <begin position="2098"/>
        <end position="2149"/>
    </location>
</feature>
<feature type="region of interest" description="Thioesterase/Claisen cyclase (TE/CLC) domain" evidence="3">
    <location>
        <begin position="2164"/>
        <end position="2393"/>
    </location>
</feature>
<feature type="compositionally biased region" description="Basic and acidic residues" evidence="7">
    <location>
        <begin position="1315"/>
        <end position="1327"/>
    </location>
</feature>
<feature type="compositionally biased region" description="Low complexity" evidence="7">
    <location>
        <begin position="1677"/>
        <end position="1698"/>
    </location>
</feature>
<feature type="compositionally biased region" description="Pro residues" evidence="7">
    <location>
        <begin position="1708"/>
        <end position="1723"/>
    </location>
</feature>
<feature type="compositionally biased region" description="Low complexity" evidence="7">
    <location>
        <begin position="1724"/>
        <end position="1734"/>
    </location>
</feature>
<feature type="compositionally biased region" description="Low complexity" evidence="7">
    <location>
        <begin position="2098"/>
        <end position="2115"/>
    </location>
</feature>
<feature type="compositionally biased region" description="Polar residues" evidence="7">
    <location>
        <begin position="2140"/>
        <end position="2149"/>
    </location>
</feature>
<feature type="active site" description="For beta-ketoacyl synthase activity" evidence="5">
    <location>
        <position position="544"/>
    </location>
</feature>
<feature type="active site" description="For beta-ketoacyl synthase activity" evidence="5">
    <location>
        <position position="679"/>
    </location>
</feature>
<feature type="active site" description="For beta-ketoacyl synthase activity" evidence="5">
    <location>
        <position position="722"/>
    </location>
</feature>
<feature type="active site" description="For acyl/malonyl transferase activity" evidence="1">
    <location>
        <position position="995"/>
    </location>
</feature>
<feature type="active site" description="Proton acceptor; for dehydratase activity" evidence="6">
    <location>
        <position position="1372"/>
    </location>
</feature>
<feature type="active site" description="Proton donor; for dehydratase activity" evidence="6">
    <location>
        <position position="1570"/>
    </location>
</feature>
<feature type="active site" description="For thioesterase activity" evidence="2">
    <location>
        <position position="2234"/>
    </location>
</feature>
<feature type="modified residue" description="O-(pantetheine 4'-phosphoryl)serine" evidence="4">
    <location>
        <position position="1770"/>
    </location>
</feature>
<feature type="modified residue" description="O-(pantetheine 4'-phosphoryl)serine" evidence="4">
    <location>
        <position position="1911"/>
    </location>
</feature>
<feature type="modified residue" description="O-(pantetheine 4'-phosphoryl)serine" evidence="4">
    <location>
        <position position="2057"/>
    </location>
</feature>
<gene>
    <name evidence="14" type="primary">pksA</name>
</gene>
<reference key="1">
    <citation type="journal article" date="2006" name="Mycopathologia">
        <title>A polyketide synthase gene required for biosynthesis of the aflatoxin-like toxin, dothistromin.</title>
        <authorList>
            <person name="Bradshaw R.E."/>
            <person name="Jin H."/>
            <person name="Morgan B.S."/>
            <person name="Schwelm A."/>
            <person name="Teddy O.R."/>
            <person name="Young C.A."/>
            <person name="Zhang S."/>
        </authorList>
    </citation>
    <scope>NUCLEOTIDE SEQUENCE [GENOMIC DNA]</scope>
    <scope>FUNCTION</scope>
    <scope>DISRUPTION PHENOTYPE</scope>
    <source>
        <strain>NZE7</strain>
    </source>
</reference>
<reference key="2">
    <citation type="journal article" date="2007" name="Fungal Genet. Biol.">
        <title>A fragmented aflatoxin-like gene cluster in the forest pathogen Dothistroma septosporum.</title>
        <authorList>
            <person name="Zhang S."/>
            <person name="Schwelm A."/>
            <person name="Jin H."/>
            <person name="Collins L.J."/>
            <person name="Bradshaw R.E."/>
        </authorList>
    </citation>
    <scope>NUCLEOTIDE SEQUENCE [GENOMIC DNA]</scope>
    <scope>INDUCTION</scope>
    <source>
        <strain>NZE7</strain>
    </source>
</reference>
<reference key="3">
    <citation type="submission" date="2010-07" db="EMBL/GenBank/DDBJ databases">
        <authorList>
            <person name="Zhang S."/>
            <person name="Bradshaw R.E."/>
        </authorList>
    </citation>
    <scope>NUCLEOTIDE SEQUENCE [GENOMIC DNA]</scope>
    <source>
        <strain>NZE1 / ATCC MYA-605</strain>
    </source>
</reference>
<reference key="4">
    <citation type="journal article" date="2002" name="Appl. Environ. Microbiol.">
        <title>Dothistroma pini, a forest pathogen, contains homologs of aflatoxin biosynthetic pathway genes.</title>
        <authorList>
            <person name="Bradshaw R.E."/>
            <person name="Bhatnagar D."/>
            <person name="Ganley R.J."/>
            <person name="Gillman C.J."/>
            <person name="Monahan B.J."/>
            <person name="Seconi J.M."/>
        </authorList>
    </citation>
    <scope>FUNCTION</scope>
    <source>
        <strain>ATCC MYA-605</strain>
    </source>
</reference>
<reference key="5">
    <citation type="journal article" date="2008" name="Mycol. Res.">
        <title>Early expression of aflatoxin-like dothistromin genes in the forest pathogen Dothistroma septosporum.</title>
        <authorList>
            <person name="Schwelm A."/>
            <person name="Barron N.J."/>
            <person name="Zhang S."/>
            <person name="Bradshaw R.E."/>
        </authorList>
    </citation>
    <scope>INDUCTION</scope>
</reference>
<reference key="6">
    <citation type="journal article" date="2010" name="Toxins">
        <title>Genetics of dothistromin biosynthesis of Dothistroma septosporum: an update.</title>
        <authorList>
            <person name="Schwelm A."/>
            <person name="Bradshaw R.E."/>
        </authorList>
    </citation>
    <scope>REVIEW ON FUNCTION</scope>
    <scope>PATHWAY</scope>
</reference>
<reference key="7">
    <citation type="journal article" date="2013" name="Fungal Genet. Biol.">
        <title>Dothistromin genes at multiple separate loci are regulated by AflR.</title>
        <authorList>
            <person name="Chettri P."/>
            <person name="Ehrlich K.C."/>
            <person name="Cary J.W."/>
            <person name="Collemare J."/>
            <person name="Cox M.P."/>
            <person name="Griffiths S.A."/>
            <person name="Olson M.A."/>
            <person name="de Wit P.J."/>
            <person name="Bradshaw R.E."/>
        </authorList>
    </citation>
    <scope>FUNCTION</scope>
    <scope>INDUCTION</scope>
    <scope>PATHWAY</scope>
</reference>
<reference key="8">
    <citation type="journal article" date="2013" name="New Phytol.">
        <title>Fragmentation of an aflatoxin-like gene cluster in a forest pathogen.</title>
        <authorList>
            <person name="Bradshaw R.E."/>
            <person name="Slot J.C."/>
            <person name="Moore G.G."/>
            <person name="Chettri P."/>
            <person name="de Wit P.J."/>
            <person name="Ehrlich K.C."/>
            <person name="Ganley A.R."/>
            <person name="Olson M.A."/>
            <person name="Rokas A."/>
            <person name="Carbone I."/>
            <person name="Cox M.P."/>
        </authorList>
    </citation>
    <scope>FUNCTION</scope>
</reference>
<reference key="9">
    <citation type="journal article" date="2015" name="Fungal Biol.">
        <title>Regulation of the aflatoxin-like toxin dothistromin by AflJ.</title>
        <authorList>
            <person name="Chettri P."/>
            <person name="Ehrlich K.C."/>
            <person name="Bradshaw R.E."/>
        </authorList>
    </citation>
    <scope>INDUCTION</scope>
</reference>
<accession>Q30DW5</accession>
<comment type="function">
    <text evidence="2 8 9 15 17 18 19">Polyketide synthase; part of the fragmented gene cluster that mediates the biosynthesis of dothistromin (DOTH), a polyketide toxin very similar in structure to the aflatoxin precursor, versicolorin B (PubMed:12039746, PubMed:17683963, PubMed:22069571, PubMed:23207690, PubMed:23448391). The first step of the pathway is the conversion of acetate to norsolorinic acid (NOR) and requires the fatty acid synthase subunits hexA and hexB, as well as the polyketide synthase pksA (PubMed:16649078, PubMed:23207690). PksA combines a hexanoyl starter unit and 7 malonyl-CoA extender units to synthesize the precursor NOR (By similarity). The hexanoyl starter unit is provided to the acyl-carrier protein (ACP) domain by the fungal fatty acid synthase hexA/hexB (By similarity). The second step is the conversion of NOR to averantin (AVN) and requires the norsolorinic acid ketoreductase nor1, which catalyzes the dehydration of norsolorinic acid to form (1'S)-averantin (PubMed:23207690). The cytochrome P450 monooxygenase avnA then catalyzes the hydroxylation of AVN to 5'hydroxyaverantin (HAVN) (PubMed:23207690). The next step is performed by adhA that transforms HAVN to averufin (AVF) (PubMed:23207690). Averufin might then be converted to hydroxyversicolorone by cypX and avfA (PubMed:23207690). Hydroxyversicolorone is further converted versiconal hemiacetal acetate (VHA) by moxY (PubMed:23207690). VHA is then the substrate for the versiconal hemiacetal acetate esterase est1 to yield versiconal (VAL) (PubMed:23207690). Versicolorin B synthase vbsA then converts VAL to versicolorin B (VERB) by closing the bisfuran ring (PubMed:16649078, PubMed:23207690). Then, the activity of the versicolorin B desaturase verB leads to versicolorin A (VERA) (PubMed:23207690). DotB, a predicted chloroperoxidase, may perform epoxidation of the A-ring of VERA (PubMed:23207690). Alternatively, a cytochrome P450, such as cypX or avnA could catalyze this step (PubMed:23207690). It is also possible that another, uncharacterized, cytochrome P450 enzyme is responsible for this step (PubMed:23207690). Opening of the epoxide could potentially be achieved by the epoxide hydrolase epoA (PubMed:23207690). However, epoA seems not to be required for DOTH biosynthesis, but other epoxide hydrolases may have the ability to complement this hydrolysis (PubMed:23207690). Alternatively, opening of the epoxide ring could be achieved non-enzymatically (PubMed:23207690). The next step is the deoxygenation of ring A to yield the 5,8-dihydroxyanthraquinone which is most likely catalyzed by the NADPH dehydrogenase encoded by ver1 (PubMed:23207690). The last stages of DOTH biosynthesis are proposed to involve hydroxylation of the bisfuran (PubMed:23207690). OrdB and norB might have oxidative roles here (PubMed:23207690). An alternative possibility is that cytochrome P450 monoogenases such as avnA and cypX might perform these steps in addition to previously proposed steps (PubMed:23207690).</text>
</comment>
<comment type="catalytic activity">
    <reaction evidence="2">
        <text>hexanoyl-[ACP] + 7 malonyl-CoA + 6 H(+) = noranthrone + holo-[ACP] + 7 CO2 + 7 CoA + 2 H2O</text>
        <dbReference type="Rhea" id="RHEA:35179"/>
        <dbReference type="Rhea" id="RHEA-COMP:9632"/>
        <dbReference type="Rhea" id="RHEA-COMP:9685"/>
        <dbReference type="ChEBI" id="CHEBI:15377"/>
        <dbReference type="ChEBI" id="CHEBI:15378"/>
        <dbReference type="ChEBI" id="CHEBI:16526"/>
        <dbReference type="ChEBI" id="CHEBI:57287"/>
        <dbReference type="ChEBI" id="CHEBI:57384"/>
        <dbReference type="ChEBI" id="CHEBI:64479"/>
        <dbReference type="ChEBI" id="CHEBI:77904"/>
        <dbReference type="ChEBI" id="CHEBI:78459"/>
        <dbReference type="EC" id="2.3.1.221"/>
    </reaction>
</comment>
<comment type="cofactor">
    <cofactor evidence="2">
        <name>pantetheine 4'-phosphate</name>
        <dbReference type="ChEBI" id="CHEBI:47942"/>
    </cofactor>
    <text evidence="2">Binds 1 phosphopantetheine covalently.</text>
</comment>
<comment type="pathway">
    <text evidence="15 18">Mycotoxin biosynthesis.</text>
</comment>
<comment type="induction">
    <text evidence="10 11 12 13">Expression is positively regulated by the dothistromin-specific transcription factors aflR and aflJ (PubMed:23207690, PubMed:25986547). Dothistromin biosynthetic proteins are co-regulated, showing a high level of expression at ealy exponential phase with a subsequent decline in older cultures (PubMed:17683963, PubMed:18262779).</text>
</comment>
<comment type="domain">
    <text evidence="16">The domain architecture includes starter unit:ACP transacylase (SAT), beta-ketoacyl synthase (KS), malonyl-CoA:ACP transacylase (MAT), product template (PT), 3 acyl-carrier domain (ACP), and thioesterase/Claisen cyclase (TE/CLC) domains (PubMed:16649078). Although duplicated ACP domains are common, pksA is the only fungal PKS containing 3 ACP domains (PubMed:16649078). The third (C-terminal) ACP is less similar in sequence to the first two and to that of the aflatoxin biosynthetic enzyme aflC (PubMed:16649078). It is possible that the third ACP domain was acquired by unequal recombination and has since diverged into a slightly different form that may have less functionality or altered specificity (PubMed:16649078).</text>
</comment>
<comment type="disruption phenotype">
    <text evidence="9">Impairs the production of dothistromin but still enables the conversion of exogenous aflatoxin precursors, including norsolorinic acid, into dothistromin (PubMed:16649078).</text>
</comment>
<name>PKSA_DOTSE</name>
<evidence type="ECO:0000250" key="1"/>
<evidence type="ECO:0000250" key="2">
    <source>
        <dbReference type="UniProtKB" id="Q12053"/>
    </source>
</evidence>
<evidence type="ECO:0000255" key="3"/>
<evidence type="ECO:0000255" key="4">
    <source>
        <dbReference type="PROSITE-ProRule" id="PRU00258"/>
    </source>
</evidence>
<evidence type="ECO:0000255" key="5">
    <source>
        <dbReference type="PROSITE-ProRule" id="PRU01348"/>
    </source>
</evidence>
<evidence type="ECO:0000255" key="6">
    <source>
        <dbReference type="PROSITE-ProRule" id="PRU01363"/>
    </source>
</evidence>
<evidence type="ECO:0000256" key="7">
    <source>
        <dbReference type="SAM" id="MobiDB-lite"/>
    </source>
</evidence>
<evidence type="ECO:0000269" key="8">
    <source>
    </source>
</evidence>
<evidence type="ECO:0000269" key="9">
    <source>
    </source>
</evidence>
<evidence type="ECO:0000269" key="10">
    <source>
    </source>
</evidence>
<evidence type="ECO:0000269" key="11">
    <source>
    </source>
</evidence>
<evidence type="ECO:0000269" key="12">
    <source>
    </source>
</evidence>
<evidence type="ECO:0000269" key="13">
    <source>
    </source>
</evidence>
<evidence type="ECO:0000303" key="14">
    <source>
    </source>
</evidence>
<evidence type="ECO:0000303" key="15">
    <source>
    </source>
</evidence>
<evidence type="ECO:0000305" key="16">
    <source>
    </source>
</evidence>
<evidence type="ECO:0000305" key="17">
    <source>
    </source>
</evidence>
<evidence type="ECO:0000305" key="18">
    <source>
    </source>
</evidence>
<evidence type="ECO:0000305" key="19">
    <source>
    </source>
</evidence>
<keyword id="KW-0012">Acyltransferase</keyword>
<keyword id="KW-0511">Multifunctional enzyme</keyword>
<keyword id="KW-0596">Phosphopantetheine</keyword>
<keyword id="KW-0597">Phosphoprotein</keyword>
<keyword id="KW-0677">Repeat</keyword>
<keyword id="KW-0808">Transferase</keyword>
<sequence length="2399" mass="259252">MTHSNATRVLVFGDQTYDFVPKLRELFHVKDNPILTAFLEQSHYVVRAQMIQTLPPAEHKAARTFDLADMLKKYVAGKLNPAFQTALSCITQLGVFMREFHDFTKPYPRHDSSYVLGICTGSLAAAAVSSSNSLSELLPIAVQTALIAFRLGLCVTDMRDRLESSEEDRTQPWSVVLFDTDEQTVTKAIKDFCTSNVLPKTKQPWITSASSKTITISGAPRVLKKLSQEPALKDKKTRQIPIYVPAHNSALFTPEDVKSILETTPVDTWSNYPTKLPFISSVSGKMAWADNYLAVIHLALNQCLLESIGWGKVETELPRLLKSRGAENVLITPITTSADRALSAALSPTISNIEVEKPTINESFAHRPGSGKSKLAIVSMSGRFPEAQSTDAFWDLLYKGLDVVKEVPKRRWDVETHVDPTGRARNKGATKWGCWLDFAGEFDPRFFSISPKEAPQMDPAQRMALMSTWEAMERGGIVPDTTPSTQRNRIGVFHGVTSNDWMETNTAQNIDTYFITGGNRGFIPGRINFCFEFSGPSFTNDTACSSSLAAIHLACNSLWRGDCDTAVAGGTNMIFTPDGHAGLDKGFFLSRTGNCKPFDDKADGYCRAEGVGTVMVKRLEDALADGDPILGTILDAKTNHSAMSDSMTRPFVPAQIDNMEACLSTAGVDPTSLDYIEMHGTGTQVGDAVEMESVLSVFAPNEQFRGKDQPLYVGSAKANIGHGEGVSGVTSLIKVLLMMQNNTIPPHCGIKPGSKINHNYPDLAARNVHIAFEPKPFLRREGKLRRVLINNFSAAGGNTALLIEDAPDRMPLSGQDPRTTQTVTISGHVGKSLSNNVANLLAHLKKNPTIDLSQLAYTVSARRWHHLHRVAVAGTTVADITAKLEKAIENKEGVNRPKAKPSVFFAFTGQGSQYLGMGKQLYDSYPMFRSELQGYDRLAQSQGFPSFAHIFTETKGDVEQNLPVVVQLAITCLQMALFNLVTSFGIKASAVVGHSLGEYAALYAAGVLSASDTIYLVGKRAELLQDHCQRGTHAMLACKASEWSLAEITAGKNVEVACVNGPEDTVLSGTVEEIGEVQKTLSAKSIKATLLKLPFAFHSAQVQPILEDFEELAAGATFEKPKLAVISPLLGSVVEDEGVVGPNYLARHCREAVGMVKALGVAKEKGIINEKTIVIEIGPKPLLCGMIKNILGQNIVALPTLKDKGPDVWQNLSNIFTTLYTGGLDINWTAFHAPFEPAKKVLQLPDYGWDLKDYFIQYEGDWVLHRHKIHCNCADAGKDVHNTSHYCPGKHTFAENVVVPGGAQKAVQEAPAAKTETKKMSKLDPTKEAYPGIPLTTTVHKVIEEKTEPLGAQFTVETDISRKDVNSIAQGHTVDSIPLCTPSFYADIALQVGKYAMDRIRAGHPGAGAIDGRVDVTDLVVDKALIPHGKAPQLLRTNVTMSWPPKMAATTRSAKVTFKTYTADGKLDTDHAYCTVRFTTDSQQKSLQKKVPEYKAAIAKLRARDAKGELTHYNTKSGYKLMSSMAHFHPDYKLLDNLVLNEAENEAVSVMNFSSCTDAGIYAAHPAYVDAITQVGGFAMNAKDDTDIDKEVYVNHGWESFQVYKKMEKSVEYVVYSKMTKDPKGDMVHGDTIVLDGDEVVAFFRGLSLRSVPRKALRAVLQSAMDKGIRQRGGKPGAAKGAVAAPAPAKKMVEPVKAASKKETPAAAAPPSPSKAAPPPAPKPAALKASVPKADPGKVDEALKIISEESGIALDELTDDSNFTDMGVDSLSSMVITSRLREDLELDLAPDFALFADCPTVASLRTFLAGAAGGPTDSPAAIATLEFGEPTPAKELEAGPALKSTPISPGVQALQPVPAPTPAPKPVITSPAAPVSSKVFDDALQIISEESGIALDELTDDSNFTDMGVDSLSSMVITSRLREDLELDLSPDWALFADCPTVASLRSFLGGSGPGSTAPADADTPVDTTAAEIEAPVPNEAASYMPNSSQADVDDAVAAVIGNDPPRRPEPPKQAAAPAVARTEALNAALDIIAEESGVAAEDFTDDTIFSDIGIDSLCSMVISSRFREELELDLDSQFSLFVDLPTVAQLREFLTGSSADSDSSSVASNPADPAATPPRSESSDTEPDDEAPSKPKSGPGSTDSCRSTNSVILQGKPKTAAKTLFLLPDGGGSASSYSVIPKLQSDVAVVGINCPYARDPENMTCTWQAMMQSFINEIKRRQPKGPYHLGGWSSGGAFAYVTAEKMIKQGDEVGSLFIFDAPVPQVMEKLPREFYEAVNFTESTAVGTAEPPPYLIPHFMAVVDVMLDYKCKPLQTKKMPNVGLIWADSTVMKEDEAPKMKGMHFMIQKRTNFGPDGWDEVCPGAKFEIVKAVDTNHFTLMTKARVNYVSDLIDKVMG</sequence>
<proteinExistence type="evidence at transcript level"/>
<protein>
    <recommendedName>
        <fullName evidence="2">Norsolorinic acid synthase</fullName>
        <shortName evidence="2">NSAS</shortName>
        <ecNumber evidence="2">2.3.1.221</ecNumber>
    </recommendedName>
    <alternativeName>
        <fullName evidence="14">Dothistromin biosynthesis polyketide synthase</fullName>
    </alternativeName>
    <alternativeName>
        <fullName evidence="14">Polyketide synthase A</fullName>
    </alternativeName>
</protein>
<dbReference type="EC" id="2.3.1.221" evidence="2"/>
<dbReference type="EMBL" id="DQ149246">
    <property type="protein sequence ID" value="AAZ95017.1"/>
    <property type="molecule type" value="Genomic_DNA"/>
</dbReference>
<dbReference type="SMR" id="Q30DW5"/>
<dbReference type="ESTHER" id="mycpj-q30dw5">
    <property type="family name" value="Thioesterase"/>
</dbReference>
<dbReference type="OMA" id="KWGCWLD"/>
<dbReference type="GO" id="GO:0004312">
    <property type="term" value="F:fatty acid synthase activity"/>
    <property type="evidence" value="ECO:0007669"/>
    <property type="project" value="TreeGrafter"/>
</dbReference>
<dbReference type="GO" id="GO:0102973">
    <property type="term" value="F:norsolorinate anthrone synthase activity"/>
    <property type="evidence" value="ECO:0007669"/>
    <property type="project" value="UniProtKB-EC"/>
</dbReference>
<dbReference type="GO" id="GO:0031177">
    <property type="term" value="F:phosphopantetheine binding"/>
    <property type="evidence" value="ECO:0007669"/>
    <property type="project" value="InterPro"/>
</dbReference>
<dbReference type="GO" id="GO:0006633">
    <property type="term" value="P:fatty acid biosynthetic process"/>
    <property type="evidence" value="ECO:0007669"/>
    <property type="project" value="TreeGrafter"/>
</dbReference>
<dbReference type="GO" id="GO:0044550">
    <property type="term" value="P:secondary metabolite biosynthetic process"/>
    <property type="evidence" value="ECO:0007669"/>
    <property type="project" value="UniProtKB-ARBA"/>
</dbReference>
<dbReference type="CDD" id="cd00833">
    <property type="entry name" value="PKS"/>
    <property type="match status" value="1"/>
</dbReference>
<dbReference type="FunFam" id="3.40.366.10:FF:000002">
    <property type="entry name" value="Probable polyketide synthase 2"/>
    <property type="match status" value="1"/>
</dbReference>
<dbReference type="FunFam" id="1.10.1200.10:FF:000011">
    <property type="entry name" value="Sterigmatocystin biosynthesis polyketide synthase"/>
    <property type="match status" value="3"/>
</dbReference>
<dbReference type="FunFam" id="3.10.129.110:FF:000001">
    <property type="entry name" value="Sterigmatocystin biosynthesis polyketide synthase"/>
    <property type="match status" value="1"/>
</dbReference>
<dbReference type="FunFam" id="3.40.47.10:FF:000031">
    <property type="entry name" value="Sterigmatocystin biosynthesis polyketide synthase"/>
    <property type="match status" value="1"/>
</dbReference>
<dbReference type="FunFam" id="3.40.50.1820:FF:000116">
    <property type="entry name" value="Sterigmatocystin biosynthesis polyketide synthase"/>
    <property type="match status" value="1"/>
</dbReference>
<dbReference type="Gene3D" id="3.30.70.3290">
    <property type="match status" value="1"/>
</dbReference>
<dbReference type="Gene3D" id="3.40.47.10">
    <property type="match status" value="1"/>
</dbReference>
<dbReference type="Gene3D" id="1.10.1200.10">
    <property type="entry name" value="ACP-like"/>
    <property type="match status" value="3"/>
</dbReference>
<dbReference type="Gene3D" id="3.40.50.1820">
    <property type="entry name" value="alpha/beta hydrolase"/>
    <property type="match status" value="1"/>
</dbReference>
<dbReference type="Gene3D" id="3.30.70.250">
    <property type="entry name" value="Malonyl-CoA ACP transacylase, ACP-binding"/>
    <property type="match status" value="1"/>
</dbReference>
<dbReference type="Gene3D" id="3.40.366.10">
    <property type="entry name" value="Malonyl-Coenzyme A Acyl Carrier Protein, domain 2"/>
    <property type="match status" value="2"/>
</dbReference>
<dbReference type="Gene3D" id="3.10.129.110">
    <property type="entry name" value="Polyketide synthase dehydratase"/>
    <property type="match status" value="1"/>
</dbReference>
<dbReference type="InterPro" id="IPR029058">
    <property type="entry name" value="AB_hydrolase_fold"/>
</dbReference>
<dbReference type="InterPro" id="IPR001227">
    <property type="entry name" value="Ac_transferase_dom_sf"/>
</dbReference>
<dbReference type="InterPro" id="IPR036736">
    <property type="entry name" value="ACP-like_sf"/>
</dbReference>
<dbReference type="InterPro" id="IPR014043">
    <property type="entry name" value="Acyl_transferase_dom"/>
</dbReference>
<dbReference type="InterPro" id="IPR016035">
    <property type="entry name" value="Acyl_Trfase/lysoPLipase"/>
</dbReference>
<dbReference type="InterPro" id="IPR014031">
    <property type="entry name" value="Ketoacyl_synth_C"/>
</dbReference>
<dbReference type="InterPro" id="IPR014030">
    <property type="entry name" value="Ketoacyl_synth_N"/>
</dbReference>
<dbReference type="InterPro" id="IPR016036">
    <property type="entry name" value="Malonyl_transacylase_ACP-bd"/>
</dbReference>
<dbReference type="InterPro" id="IPR020841">
    <property type="entry name" value="PKS_Beta-ketoAc_synthase_dom"/>
</dbReference>
<dbReference type="InterPro" id="IPR042104">
    <property type="entry name" value="PKS_dehydratase_sf"/>
</dbReference>
<dbReference type="InterPro" id="IPR049551">
    <property type="entry name" value="PKS_DH_C"/>
</dbReference>
<dbReference type="InterPro" id="IPR049900">
    <property type="entry name" value="PKS_mFAS_DH"/>
</dbReference>
<dbReference type="InterPro" id="IPR050091">
    <property type="entry name" value="PKS_NRPS_Biosynth_Enz"/>
</dbReference>
<dbReference type="InterPro" id="IPR020806">
    <property type="entry name" value="PKS_PP-bd"/>
</dbReference>
<dbReference type="InterPro" id="IPR009081">
    <property type="entry name" value="PP-bd_ACP"/>
</dbReference>
<dbReference type="InterPro" id="IPR030918">
    <property type="entry name" value="PT_fungal_PKS"/>
</dbReference>
<dbReference type="InterPro" id="IPR032088">
    <property type="entry name" value="SAT"/>
</dbReference>
<dbReference type="InterPro" id="IPR001031">
    <property type="entry name" value="Thioesterase"/>
</dbReference>
<dbReference type="InterPro" id="IPR016039">
    <property type="entry name" value="Thiolase-like"/>
</dbReference>
<dbReference type="NCBIfam" id="TIGR04532">
    <property type="entry name" value="PT_fungal_PKS"/>
    <property type="match status" value="1"/>
</dbReference>
<dbReference type="PANTHER" id="PTHR43775">
    <property type="entry name" value="FATTY ACID SYNTHASE"/>
    <property type="match status" value="1"/>
</dbReference>
<dbReference type="PANTHER" id="PTHR43775:SF40">
    <property type="entry name" value="NORSOLORINIC ACID SYNTHASE STCA"/>
    <property type="match status" value="1"/>
</dbReference>
<dbReference type="Pfam" id="PF00698">
    <property type="entry name" value="Acyl_transf_1"/>
    <property type="match status" value="1"/>
</dbReference>
<dbReference type="Pfam" id="PF22621">
    <property type="entry name" value="CurL-like_PKS_C"/>
    <property type="match status" value="1"/>
</dbReference>
<dbReference type="Pfam" id="PF00109">
    <property type="entry name" value="ketoacyl-synt"/>
    <property type="match status" value="1"/>
</dbReference>
<dbReference type="Pfam" id="PF02801">
    <property type="entry name" value="Ketoacyl-synt_C"/>
    <property type="match status" value="1"/>
</dbReference>
<dbReference type="Pfam" id="PF00550">
    <property type="entry name" value="PP-binding"/>
    <property type="match status" value="3"/>
</dbReference>
<dbReference type="Pfam" id="PF14765">
    <property type="entry name" value="PS-DH"/>
    <property type="match status" value="1"/>
</dbReference>
<dbReference type="Pfam" id="PF16073">
    <property type="entry name" value="SAT"/>
    <property type="match status" value="1"/>
</dbReference>
<dbReference type="Pfam" id="PF00975">
    <property type="entry name" value="Thioesterase"/>
    <property type="match status" value="1"/>
</dbReference>
<dbReference type="SMART" id="SM00827">
    <property type="entry name" value="PKS_AT"/>
    <property type="match status" value="1"/>
</dbReference>
<dbReference type="SMART" id="SM00825">
    <property type="entry name" value="PKS_KS"/>
    <property type="match status" value="1"/>
</dbReference>
<dbReference type="SMART" id="SM00823">
    <property type="entry name" value="PKS_PP"/>
    <property type="match status" value="3"/>
</dbReference>
<dbReference type="SUPFAM" id="SSF47336">
    <property type="entry name" value="ACP-like"/>
    <property type="match status" value="3"/>
</dbReference>
<dbReference type="SUPFAM" id="SSF53474">
    <property type="entry name" value="alpha/beta-Hydrolases"/>
    <property type="match status" value="1"/>
</dbReference>
<dbReference type="SUPFAM" id="SSF52151">
    <property type="entry name" value="FabD/lysophospholipase-like"/>
    <property type="match status" value="1"/>
</dbReference>
<dbReference type="SUPFAM" id="SSF55048">
    <property type="entry name" value="Probable ACP-binding domain of malonyl-CoA ACP transacylase"/>
    <property type="match status" value="1"/>
</dbReference>
<dbReference type="SUPFAM" id="SSF53901">
    <property type="entry name" value="Thiolase-like"/>
    <property type="match status" value="1"/>
</dbReference>
<dbReference type="PROSITE" id="PS50075">
    <property type="entry name" value="CARRIER"/>
    <property type="match status" value="3"/>
</dbReference>
<dbReference type="PROSITE" id="PS52004">
    <property type="entry name" value="KS3_2"/>
    <property type="match status" value="1"/>
</dbReference>
<dbReference type="PROSITE" id="PS52019">
    <property type="entry name" value="PKS_MFAS_DH"/>
    <property type="match status" value="1"/>
</dbReference>
<organism>
    <name type="scientific">Dothistroma septosporum</name>
    <name type="common">Red band needle blight fungus</name>
    <name type="synonym">Mycosphaerella pini</name>
    <dbReference type="NCBI Taxonomy" id="64363"/>
    <lineage>
        <taxon>Eukaryota</taxon>
        <taxon>Fungi</taxon>
        <taxon>Dikarya</taxon>
        <taxon>Ascomycota</taxon>
        <taxon>Pezizomycotina</taxon>
        <taxon>Dothideomycetes</taxon>
        <taxon>Dothideomycetidae</taxon>
        <taxon>Mycosphaerellales</taxon>
        <taxon>Mycosphaerellaceae</taxon>
        <taxon>Dothistroma</taxon>
    </lineage>
</organism>